<proteinExistence type="inferred from homology"/>
<comment type="function">
    <text evidence="1">Specifically methylates the N4 position of cytidine in position 1402 (C1402) of 16S rRNA.</text>
</comment>
<comment type="catalytic activity">
    <reaction evidence="1">
        <text>cytidine(1402) in 16S rRNA + S-adenosyl-L-methionine = N(4)-methylcytidine(1402) in 16S rRNA + S-adenosyl-L-homocysteine + H(+)</text>
        <dbReference type="Rhea" id="RHEA:42928"/>
        <dbReference type="Rhea" id="RHEA-COMP:10286"/>
        <dbReference type="Rhea" id="RHEA-COMP:10287"/>
        <dbReference type="ChEBI" id="CHEBI:15378"/>
        <dbReference type="ChEBI" id="CHEBI:57856"/>
        <dbReference type="ChEBI" id="CHEBI:59789"/>
        <dbReference type="ChEBI" id="CHEBI:74506"/>
        <dbReference type="ChEBI" id="CHEBI:82748"/>
        <dbReference type="EC" id="2.1.1.199"/>
    </reaction>
</comment>
<comment type="subcellular location">
    <subcellularLocation>
        <location evidence="1">Cytoplasm</location>
    </subcellularLocation>
</comment>
<comment type="similarity">
    <text evidence="1">Belongs to the methyltransferase superfamily. RsmH family.</text>
</comment>
<sequence length="318" mass="35666">MTETFKHQSVLLKETVDALNVQPDGIYVDATLGGGGHSEYLLSQLTTGHLYSFDQDDHALESSRQRLAKYADAGQVTFIKSNFRFLKIALAEQGITKIDGILYDLGVSSPQFDDAQRGFSYKKEAPLDMRMDQGAELTAYTVVNEWSYQQLIKIFFRYGEEKFSKQVARKIEQQREIAPIETTIQLADLIKEAIPAPARRTGGHPAKRIFQAIRIAVNDELGAIEDSVEQAIPLVKVGGRISIITFQSLEDRLVKTMFKEQATLPDIPKGLPIMPGTEKTVLKLVNRKPILPTEDELTVNHRAHSAKLRVAEKQKEID</sequence>
<organism>
    <name type="scientific">Latilactobacillus sakei subsp. sakei (strain 23K)</name>
    <name type="common">Lactobacillus sakei subsp. sakei</name>
    <dbReference type="NCBI Taxonomy" id="314315"/>
    <lineage>
        <taxon>Bacteria</taxon>
        <taxon>Bacillati</taxon>
        <taxon>Bacillota</taxon>
        <taxon>Bacilli</taxon>
        <taxon>Lactobacillales</taxon>
        <taxon>Lactobacillaceae</taxon>
        <taxon>Latilactobacillus</taxon>
    </lineage>
</organism>
<reference key="1">
    <citation type="journal article" date="2005" name="Nat. Biotechnol.">
        <title>The complete genome sequence of the meat-borne lactic acid bacterium Lactobacillus sakei 23K.</title>
        <authorList>
            <person name="Chaillou S."/>
            <person name="Champomier-Verges M.-C."/>
            <person name="Cornet M."/>
            <person name="Crutz-Le Coq A.-M."/>
            <person name="Dudez A.-M."/>
            <person name="Martin V."/>
            <person name="Beaufils S."/>
            <person name="Darbon-Rongere E."/>
            <person name="Bossy R."/>
            <person name="Loux V."/>
            <person name="Zagorec M."/>
        </authorList>
    </citation>
    <scope>NUCLEOTIDE SEQUENCE [LARGE SCALE GENOMIC DNA]</scope>
    <source>
        <strain>23K</strain>
    </source>
</reference>
<dbReference type="EC" id="2.1.1.199" evidence="1"/>
<dbReference type="EMBL" id="CR936503">
    <property type="protein sequence ID" value="CAI55047.1"/>
    <property type="molecule type" value="Genomic_DNA"/>
</dbReference>
<dbReference type="RefSeq" id="WP_011374450.1">
    <property type="nucleotide sequence ID" value="NC_007576.1"/>
</dbReference>
<dbReference type="SMR" id="Q38XN3"/>
<dbReference type="STRING" id="314315.LCA_0743"/>
<dbReference type="KEGG" id="lsa:LCA_0743"/>
<dbReference type="eggNOG" id="COG0275">
    <property type="taxonomic scope" value="Bacteria"/>
</dbReference>
<dbReference type="HOGENOM" id="CLU_038422_2_0_9"/>
<dbReference type="OrthoDB" id="9806637at2"/>
<dbReference type="Proteomes" id="UP000002707">
    <property type="component" value="Chromosome"/>
</dbReference>
<dbReference type="GO" id="GO:0005737">
    <property type="term" value="C:cytoplasm"/>
    <property type="evidence" value="ECO:0007669"/>
    <property type="project" value="UniProtKB-SubCell"/>
</dbReference>
<dbReference type="GO" id="GO:0071424">
    <property type="term" value="F:rRNA (cytosine-N4-)-methyltransferase activity"/>
    <property type="evidence" value="ECO:0007669"/>
    <property type="project" value="UniProtKB-UniRule"/>
</dbReference>
<dbReference type="GO" id="GO:0070475">
    <property type="term" value="P:rRNA base methylation"/>
    <property type="evidence" value="ECO:0007669"/>
    <property type="project" value="UniProtKB-UniRule"/>
</dbReference>
<dbReference type="FunFam" id="1.10.150.170:FF:000001">
    <property type="entry name" value="Ribosomal RNA small subunit methyltransferase H"/>
    <property type="match status" value="1"/>
</dbReference>
<dbReference type="Gene3D" id="1.10.150.170">
    <property type="entry name" value="Putative methyltransferase TM0872, insert domain"/>
    <property type="match status" value="1"/>
</dbReference>
<dbReference type="Gene3D" id="3.40.50.150">
    <property type="entry name" value="Vaccinia Virus protein VP39"/>
    <property type="match status" value="1"/>
</dbReference>
<dbReference type="HAMAP" id="MF_01007">
    <property type="entry name" value="16SrRNA_methyltr_H"/>
    <property type="match status" value="1"/>
</dbReference>
<dbReference type="InterPro" id="IPR002903">
    <property type="entry name" value="RsmH"/>
</dbReference>
<dbReference type="InterPro" id="IPR023397">
    <property type="entry name" value="SAM-dep_MeTrfase_MraW_recog"/>
</dbReference>
<dbReference type="InterPro" id="IPR029063">
    <property type="entry name" value="SAM-dependent_MTases_sf"/>
</dbReference>
<dbReference type="NCBIfam" id="TIGR00006">
    <property type="entry name" value="16S rRNA (cytosine(1402)-N(4))-methyltransferase RsmH"/>
    <property type="match status" value="1"/>
</dbReference>
<dbReference type="PANTHER" id="PTHR11265:SF0">
    <property type="entry name" value="12S RRNA N4-METHYLCYTIDINE METHYLTRANSFERASE"/>
    <property type="match status" value="1"/>
</dbReference>
<dbReference type="PANTHER" id="PTHR11265">
    <property type="entry name" value="S-ADENOSYL-METHYLTRANSFERASE MRAW"/>
    <property type="match status" value="1"/>
</dbReference>
<dbReference type="Pfam" id="PF01795">
    <property type="entry name" value="Methyltransf_5"/>
    <property type="match status" value="1"/>
</dbReference>
<dbReference type="PIRSF" id="PIRSF004486">
    <property type="entry name" value="MraW"/>
    <property type="match status" value="1"/>
</dbReference>
<dbReference type="SUPFAM" id="SSF81799">
    <property type="entry name" value="Putative methyltransferase TM0872, insert domain"/>
    <property type="match status" value="1"/>
</dbReference>
<dbReference type="SUPFAM" id="SSF53335">
    <property type="entry name" value="S-adenosyl-L-methionine-dependent methyltransferases"/>
    <property type="match status" value="1"/>
</dbReference>
<accession>Q38XN3</accession>
<name>RSMH_LATSS</name>
<feature type="chain" id="PRO_0000223545" description="Ribosomal RNA small subunit methyltransferase H">
    <location>
        <begin position="1"/>
        <end position="318"/>
    </location>
</feature>
<feature type="binding site" evidence="1">
    <location>
        <begin position="35"/>
        <end position="37"/>
    </location>
    <ligand>
        <name>S-adenosyl-L-methionine</name>
        <dbReference type="ChEBI" id="CHEBI:59789"/>
    </ligand>
</feature>
<feature type="binding site" evidence="1">
    <location>
        <position position="54"/>
    </location>
    <ligand>
        <name>S-adenosyl-L-methionine</name>
        <dbReference type="ChEBI" id="CHEBI:59789"/>
    </ligand>
</feature>
<feature type="binding site" evidence="1">
    <location>
        <position position="83"/>
    </location>
    <ligand>
        <name>S-adenosyl-L-methionine</name>
        <dbReference type="ChEBI" id="CHEBI:59789"/>
    </ligand>
</feature>
<feature type="binding site" evidence="1">
    <location>
        <position position="104"/>
    </location>
    <ligand>
        <name>S-adenosyl-L-methionine</name>
        <dbReference type="ChEBI" id="CHEBI:59789"/>
    </ligand>
</feature>
<feature type="binding site" evidence="1">
    <location>
        <position position="111"/>
    </location>
    <ligand>
        <name>S-adenosyl-L-methionine</name>
        <dbReference type="ChEBI" id="CHEBI:59789"/>
    </ligand>
</feature>
<gene>
    <name evidence="1" type="primary">rsmH</name>
    <name type="synonym">mraW</name>
    <name type="ordered locus">LCA_0743</name>
</gene>
<protein>
    <recommendedName>
        <fullName evidence="1">Ribosomal RNA small subunit methyltransferase H</fullName>
        <ecNumber evidence="1">2.1.1.199</ecNumber>
    </recommendedName>
    <alternativeName>
        <fullName evidence="1">16S rRNA m(4)C1402 methyltransferase</fullName>
    </alternativeName>
    <alternativeName>
        <fullName evidence="1">rRNA (cytosine-N(4)-)-methyltransferase RsmH</fullName>
    </alternativeName>
</protein>
<keyword id="KW-0963">Cytoplasm</keyword>
<keyword id="KW-0489">Methyltransferase</keyword>
<keyword id="KW-1185">Reference proteome</keyword>
<keyword id="KW-0698">rRNA processing</keyword>
<keyword id="KW-0949">S-adenosyl-L-methionine</keyword>
<keyword id="KW-0808">Transferase</keyword>
<evidence type="ECO:0000255" key="1">
    <source>
        <dbReference type="HAMAP-Rule" id="MF_01007"/>
    </source>
</evidence>